<gene>
    <name evidence="1" type="primary">pnp</name>
    <name type="ordered locus">Ajs_0953</name>
</gene>
<evidence type="ECO:0000255" key="1">
    <source>
        <dbReference type="HAMAP-Rule" id="MF_01595"/>
    </source>
</evidence>
<evidence type="ECO:0000256" key="2">
    <source>
        <dbReference type="SAM" id="MobiDB-lite"/>
    </source>
</evidence>
<accession>A1W4L8</accession>
<reference key="1">
    <citation type="submission" date="2006-12" db="EMBL/GenBank/DDBJ databases">
        <title>Complete sequence of chromosome 1 of Acidovorax sp. JS42.</title>
        <authorList>
            <person name="Copeland A."/>
            <person name="Lucas S."/>
            <person name="Lapidus A."/>
            <person name="Barry K."/>
            <person name="Detter J.C."/>
            <person name="Glavina del Rio T."/>
            <person name="Dalin E."/>
            <person name="Tice H."/>
            <person name="Pitluck S."/>
            <person name="Chertkov O."/>
            <person name="Brettin T."/>
            <person name="Bruce D."/>
            <person name="Han C."/>
            <person name="Tapia R."/>
            <person name="Gilna P."/>
            <person name="Schmutz J."/>
            <person name="Larimer F."/>
            <person name="Land M."/>
            <person name="Hauser L."/>
            <person name="Kyrpides N."/>
            <person name="Kim E."/>
            <person name="Stahl D."/>
            <person name="Richardson P."/>
        </authorList>
    </citation>
    <scope>NUCLEOTIDE SEQUENCE [LARGE SCALE GENOMIC DNA]</scope>
    <source>
        <strain>JS42</strain>
    </source>
</reference>
<organism>
    <name type="scientific">Acidovorax sp. (strain JS42)</name>
    <dbReference type="NCBI Taxonomy" id="232721"/>
    <lineage>
        <taxon>Bacteria</taxon>
        <taxon>Pseudomonadati</taxon>
        <taxon>Pseudomonadota</taxon>
        <taxon>Betaproteobacteria</taxon>
        <taxon>Burkholderiales</taxon>
        <taxon>Comamonadaceae</taxon>
        <taxon>Acidovorax</taxon>
    </lineage>
</organism>
<comment type="function">
    <text evidence="1">Involved in mRNA degradation. Catalyzes the phosphorolysis of single-stranded polyribonucleotides processively in the 3'- to 5'-direction.</text>
</comment>
<comment type="catalytic activity">
    <reaction evidence="1">
        <text>RNA(n+1) + phosphate = RNA(n) + a ribonucleoside 5'-diphosphate</text>
        <dbReference type="Rhea" id="RHEA:22096"/>
        <dbReference type="Rhea" id="RHEA-COMP:14527"/>
        <dbReference type="Rhea" id="RHEA-COMP:17342"/>
        <dbReference type="ChEBI" id="CHEBI:43474"/>
        <dbReference type="ChEBI" id="CHEBI:57930"/>
        <dbReference type="ChEBI" id="CHEBI:140395"/>
        <dbReference type="EC" id="2.7.7.8"/>
    </reaction>
</comment>
<comment type="cofactor">
    <cofactor evidence="1">
        <name>Mg(2+)</name>
        <dbReference type="ChEBI" id="CHEBI:18420"/>
    </cofactor>
</comment>
<comment type="subcellular location">
    <subcellularLocation>
        <location evidence="1">Cytoplasm</location>
    </subcellularLocation>
</comment>
<comment type="similarity">
    <text evidence="1">Belongs to the polyribonucleotide nucleotidyltransferase family.</text>
</comment>
<proteinExistence type="inferred from homology"/>
<dbReference type="EC" id="2.7.7.8" evidence="1"/>
<dbReference type="EMBL" id="CP000539">
    <property type="protein sequence ID" value="ABM41193.1"/>
    <property type="molecule type" value="Genomic_DNA"/>
</dbReference>
<dbReference type="SMR" id="A1W4L8"/>
<dbReference type="STRING" id="232721.Ajs_0953"/>
<dbReference type="KEGG" id="ajs:Ajs_0953"/>
<dbReference type="eggNOG" id="COG1185">
    <property type="taxonomic scope" value="Bacteria"/>
</dbReference>
<dbReference type="HOGENOM" id="CLU_004217_2_2_4"/>
<dbReference type="Proteomes" id="UP000000645">
    <property type="component" value="Chromosome"/>
</dbReference>
<dbReference type="GO" id="GO:0005829">
    <property type="term" value="C:cytosol"/>
    <property type="evidence" value="ECO:0007669"/>
    <property type="project" value="TreeGrafter"/>
</dbReference>
<dbReference type="GO" id="GO:0000175">
    <property type="term" value="F:3'-5'-RNA exonuclease activity"/>
    <property type="evidence" value="ECO:0007669"/>
    <property type="project" value="TreeGrafter"/>
</dbReference>
<dbReference type="GO" id="GO:0000287">
    <property type="term" value="F:magnesium ion binding"/>
    <property type="evidence" value="ECO:0007669"/>
    <property type="project" value="UniProtKB-UniRule"/>
</dbReference>
<dbReference type="GO" id="GO:0004654">
    <property type="term" value="F:polyribonucleotide nucleotidyltransferase activity"/>
    <property type="evidence" value="ECO:0007669"/>
    <property type="project" value="UniProtKB-UniRule"/>
</dbReference>
<dbReference type="GO" id="GO:0003723">
    <property type="term" value="F:RNA binding"/>
    <property type="evidence" value="ECO:0007669"/>
    <property type="project" value="UniProtKB-UniRule"/>
</dbReference>
<dbReference type="GO" id="GO:0006402">
    <property type="term" value="P:mRNA catabolic process"/>
    <property type="evidence" value="ECO:0007669"/>
    <property type="project" value="UniProtKB-UniRule"/>
</dbReference>
<dbReference type="GO" id="GO:0006396">
    <property type="term" value="P:RNA processing"/>
    <property type="evidence" value="ECO:0007669"/>
    <property type="project" value="InterPro"/>
</dbReference>
<dbReference type="CDD" id="cd02393">
    <property type="entry name" value="KH-I_PNPase"/>
    <property type="match status" value="1"/>
</dbReference>
<dbReference type="CDD" id="cd11363">
    <property type="entry name" value="RNase_PH_PNPase_1"/>
    <property type="match status" value="1"/>
</dbReference>
<dbReference type="CDD" id="cd11364">
    <property type="entry name" value="RNase_PH_PNPase_2"/>
    <property type="match status" value="1"/>
</dbReference>
<dbReference type="CDD" id="cd04472">
    <property type="entry name" value="S1_PNPase"/>
    <property type="match status" value="1"/>
</dbReference>
<dbReference type="FunFam" id="2.40.50.140:FF:000023">
    <property type="entry name" value="Polyribonucleotide nucleotidyltransferase"/>
    <property type="match status" value="1"/>
</dbReference>
<dbReference type="FunFam" id="3.30.1370.10:FF:000001">
    <property type="entry name" value="Polyribonucleotide nucleotidyltransferase"/>
    <property type="match status" value="1"/>
</dbReference>
<dbReference type="FunFam" id="3.30.230.70:FF:000001">
    <property type="entry name" value="Polyribonucleotide nucleotidyltransferase"/>
    <property type="match status" value="1"/>
</dbReference>
<dbReference type="FunFam" id="3.30.230.70:FF:000002">
    <property type="entry name" value="Polyribonucleotide nucleotidyltransferase"/>
    <property type="match status" value="1"/>
</dbReference>
<dbReference type="Gene3D" id="3.30.230.70">
    <property type="entry name" value="GHMP Kinase, N-terminal domain"/>
    <property type="match status" value="2"/>
</dbReference>
<dbReference type="Gene3D" id="3.30.1370.10">
    <property type="entry name" value="K Homology domain, type 1"/>
    <property type="match status" value="1"/>
</dbReference>
<dbReference type="Gene3D" id="2.40.50.140">
    <property type="entry name" value="Nucleic acid-binding proteins"/>
    <property type="match status" value="1"/>
</dbReference>
<dbReference type="HAMAP" id="MF_01595">
    <property type="entry name" value="PNPase"/>
    <property type="match status" value="1"/>
</dbReference>
<dbReference type="InterPro" id="IPR001247">
    <property type="entry name" value="ExoRNase_PH_dom1"/>
</dbReference>
<dbReference type="InterPro" id="IPR015847">
    <property type="entry name" value="ExoRNase_PH_dom2"/>
</dbReference>
<dbReference type="InterPro" id="IPR036345">
    <property type="entry name" value="ExoRNase_PH_dom2_sf"/>
</dbReference>
<dbReference type="InterPro" id="IPR004087">
    <property type="entry name" value="KH_dom"/>
</dbReference>
<dbReference type="InterPro" id="IPR004088">
    <property type="entry name" value="KH_dom_type_1"/>
</dbReference>
<dbReference type="InterPro" id="IPR036612">
    <property type="entry name" value="KH_dom_type_1_sf"/>
</dbReference>
<dbReference type="InterPro" id="IPR012340">
    <property type="entry name" value="NA-bd_OB-fold"/>
</dbReference>
<dbReference type="InterPro" id="IPR012162">
    <property type="entry name" value="PNPase"/>
</dbReference>
<dbReference type="InterPro" id="IPR027408">
    <property type="entry name" value="PNPase/RNase_PH_dom_sf"/>
</dbReference>
<dbReference type="InterPro" id="IPR015848">
    <property type="entry name" value="PNPase_PH_RNA-bd_bac/org-type"/>
</dbReference>
<dbReference type="InterPro" id="IPR036456">
    <property type="entry name" value="PNPase_PH_RNA-bd_sf"/>
</dbReference>
<dbReference type="InterPro" id="IPR020568">
    <property type="entry name" value="Ribosomal_Su5_D2-typ_SF"/>
</dbReference>
<dbReference type="InterPro" id="IPR003029">
    <property type="entry name" value="S1_domain"/>
</dbReference>
<dbReference type="NCBIfam" id="TIGR03591">
    <property type="entry name" value="polynuc_phos"/>
    <property type="match status" value="1"/>
</dbReference>
<dbReference type="NCBIfam" id="NF008805">
    <property type="entry name" value="PRK11824.1"/>
    <property type="match status" value="1"/>
</dbReference>
<dbReference type="PANTHER" id="PTHR11252">
    <property type="entry name" value="POLYRIBONUCLEOTIDE NUCLEOTIDYLTRANSFERASE"/>
    <property type="match status" value="1"/>
</dbReference>
<dbReference type="PANTHER" id="PTHR11252:SF0">
    <property type="entry name" value="POLYRIBONUCLEOTIDE NUCLEOTIDYLTRANSFERASE 1, MITOCHONDRIAL"/>
    <property type="match status" value="1"/>
</dbReference>
<dbReference type="Pfam" id="PF00013">
    <property type="entry name" value="KH_1"/>
    <property type="match status" value="1"/>
</dbReference>
<dbReference type="Pfam" id="PF03726">
    <property type="entry name" value="PNPase"/>
    <property type="match status" value="1"/>
</dbReference>
<dbReference type="Pfam" id="PF01138">
    <property type="entry name" value="RNase_PH"/>
    <property type="match status" value="2"/>
</dbReference>
<dbReference type="Pfam" id="PF03725">
    <property type="entry name" value="RNase_PH_C"/>
    <property type="match status" value="2"/>
</dbReference>
<dbReference type="Pfam" id="PF00575">
    <property type="entry name" value="S1"/>
    <property type="match status" value="1"/>
</dbReference>
<dbReference type="PIRSF" id="PIRSF005499">
    <property type="entry name" value="PNPase"/>
    <property type="match status" value="1"/>
</dbReference>
<dbReference type="SMART" id="SM00322">
    <property type="entry name" value="KH"/>
    <property type="match status" value="1"/>
</dbReference>
<dbReference type="SMART" id="SM00316">
    <property type="entry name" value="S1"/>
    <property type="match status" value="1"/>
</dbReference>
<dbReference type="SUPFAM" id="SSF54791">
    <property type="entry name" value="Eukaryotic type KH-domain (KH-domain type I)"/>
    <property type="match status" value="1"/>
</dbReference>
<dbReference type="SUPFAM" id="SSF50249">
    <property type="entry name" value="Nucleic acid-binding proteins"/>
    <property type="match status" value="1"/>
</dbReference>
<dbReference type="SUPFAM" id="SSF46915">
    <property type="entry name" value="Polynucleotide phosphorylase/guanosine pentaphosphate synthase (PNPase/GPSI), domain 3"/>
    <property type="match status" value="1"/>
</dbReference>
<dbReference type="SUPFAM" id="SSF55666">
    <property type="entry name" value="Ribonuclease PH domain 2-like"/>
    <property type="match status" value="2"/>
</dbReference>
<dbReference type="SUPFAM" id="SSF54211">
    <property type="entry name" value="Ribosomal protein S5 domain 2-like"/>
    <property type="match status" value="2"/>
</dbReference>
<dbReference type="PROSITE" id="PS50084">
    <property type="entry name" value="KH_TYPE_1"/>
    <property type="match status" value="1"/>
</dbReference>
<dbReference type="PROSITE" id="PS50126">
    <property type="entry name" value="S1"/>
    <property type="match status" value="1"/>
</dbReference>
<feature type="chain" id="PRO_0000329481" description="Polyribonucleotide nucleotidyltransferase">
    <location>
        <begin position="1"/>
        <end position="727"/>
    </location>
</feature>
<feature type="domain" description="KH" evidence="1">
    <location>
        <begin position="555"/>
        <end position="614"/>
    </location>
</feature>
<feature type="domain" description="S1 motif" evidence="1">
    <location>
        <begin position="624"/>
        <end position="692"/>
    </location>
</feature>
<feature type="region of interest" description="Disordered" evidence="2">
    <location>
        <begin position="691"/>
        <end position="727"/>
    </location>
</feature>
<feature type="compositionally biased region" description="Basic and acidic residues" evidence="2">
    <location>
        <begin position="707"/>
        <end position="720"/>
    </location>
</feature>
<feature type="binding site" evidence="1">
    <location>
        <position position="488"/>
    </location>
    <ligand>
        <name>Mg(2+)</name>
        <dbReference type="ChEBI" id="CHEBI:18420"/>
    </ligand>
</feature>
<feature type="binding site" evidence="1">
    <location>
        <position position="494"/>
    </location>
    <ligand>
        <name>Mg(2+)</name>
        <dbReference type="ChEBI" id="CHEBI:18420"/>
    </ligand>
</feature>
<sequence>MSIFNKVTKSFQWGDKTVVMETGEIARQASGAVLVNIDDTVVLATVVGSKQAKPGQDFFPLTVDYIEKTYAAGKIPGSFFKREAKPSELETLTSRLIDRPIRPLFPEGFYNEVHVVIHTISLNPEVDADIAAMIAVSAALSVSGIPFNGPIGAARVGYVNGEYVLNPGQTARKSSQLDLVVAGTEAAVLMVESEAQQLSEEIMLGAVVFGHEQGKVAINAIHELVRDAGKPVWDWQPPAKDETFIAKVTALAEGKLRAAYQIRSKQARTQALREASASVLESLKGEGVEFDAVKVEALLFDIEAKIVRSQILAGEPRIDGRDTRTVRPIEIRNSVLPRTHGSALFTRGETQALVVSTLGTERDAQRIDALAGEFEDRFIFHYNMPPFATGEVGRMGSTKRREIGHGRLAKRALVACLPSKDEFPYTIRVVSEITESNGSSSMASVCGGCLSLMDAGVPMKAHVAGIAMGLIKEDNRFAVLTDILGDEDHLGDMDFKVAGTTNGITALQMDIKIQGITKEIMQVALAQAKEARMHILGKMQEAMGEAKTEISSFAPKLYTMKINPEKIRDVIGKGGATIRALTDETGCQINIEEDGTITIAATEAAKADEAKRRIEEITAEVEVGKIYEGPVTKILDFGALINLLPGKDGLLHISQIAHERVEKVGDYLQEGQIVKVKVLETDDKGRVKLSMKALADRPAGDSGRPAPAERGERRERRDGGASEQQQQ</sequence>
<keyword id="KW-0963">Cytoplasm</keyword>
<keyword id="KW-0460">Magnesium</keyword>
<keyword id="KW-0479">Metal-binding</keyword>
<keyword id="KW-0548">Nucleotidyltransferase</keyword>
<keyword id="KW-0694">RNA-binding</keyword>
<keyword id="KW-0808">Transferase</keyword>
<name>PNP_ACISJ</name>
<protein>
    <recommendedName>
        <fullName evidence="1">Polyribonucleotide nucleotidyltransferase</fullName>
        <ecNumber evidence="1">2.7.7.8</ecNumber>
    </recommendedName>
    <alternativeName>
        <fullName evidence="1">Polynucleotide phosphorylase</fullName>
        <shortName evidence="1">PNPase</shortName>
    </alternativeName>
</protein>